<keyword id="KW-0256">Endoplasmic reticulum</keyword>
<keyword id="KW-0931">ER-Golgi transport</keyword>
<keyword id="KW-0333">Golgi apparatus</keyword>
<keyword id="KW-0472">Membrane</keyword>
<keyword id="KW-1185">Reference proteome</keyword>
<keyword id="KW-0812">Transmembrane</keyword>
<keyword id="KW-1133">Transmembrane helix</keyword>
<keyword id="KW-0813">Transport</keyword>
<proteinExistence type="evidence at transcript level"/>
<reference key="1">
    <citation type="submission" date="2004-03" db="EMBL/GenBank/DDBJ databases">
        <authorList>
            <consortium name="NIH - Xenopus Gene Collection (XGC) project"/>
        </authorList>
    </citation>
    <scope>NUCLEOTIDE SEQUENCE [LARGE SCALE MRNA]</scope>
    <source>
        <tissue>Embryo</tissue>
    </source>
</reference>
<feature type="chain" id="PRO_0000239392" description="Endoplasmic reticulum-Golgi intermediate compartment protein 3">
    <location>
        <begin position="1"/>
        <end position="384"/>
    </location>
</feature>
<feature type="topological domain" description="Cytoplasmic" evidence="2">
    <location>
        <begin position="1"/>
        <end position="25"/>
    </location>
</feature>
<feature type="transmembrane region" description="Helical" evidence="2">
    <location>
        <begin position="26"/>
        <end position="46"/>
    </location>
</feature>
<feature type="topological domain" description="Lumenal" evidence="2">
    <location>
        <begin position="47"/>
        <end position="342"/>
    </location>
</feature>
<feature type="transmembrane region" description="Helical" evidence="2">
    <location>
        <begin position="343"/>
        <end position="363"/>
    </location>
</feature>
<feature type="topological domain" description="Cytoplasmic" evidence="2">
    <location>
        <begin position="364"/>
        <end position="384"/>
    </location>
</feature>
<accession>Q6NVS2</accession>
<gene>
    <name type="primary">ergic3</name>
</gene>
<protein>
    <recommendedName>
        <fullName>Endoplasmic reticulum-Golgi intermediate compartment protein 3</fullName>
    </recommendedName>
</protein>
<evidence type="ECO:0000250" key="1"/>
<evidence type="ECO:0000255" key="2"/>
<evidence type="ECO:0000305" key="3"/>
<name>ERGI3_XENTR</name>
<dbReference type="EMBL" id="BC067932">
    <property type="protein sequence ID" value="AAH67932.1"/>
    <property type="molecule type" value="mRNA"/>
</dbReference>
<dbReference type="RefSeq" id="NP_001001226.1">
    <property type="nucleotide sequence ID" value="NM_001001226.1"/>
</dbReference>
<dbReference type="SMR" id="Q6NVS2"/>
<dbReference type="FunCoup" id="Q6NVS2">
    <property type="interactions" value="1825"/>
</dbReference>
<dbReference type="STRING" id="8364.ENSXETP00000007942"/>
<dbReference type="PaxDb" id="8364-ENSXETP00000054300"/>
<dbReference type="DNASU" id="407904"/>
<dbReference type="GeneID" id="407904"/>
<dbReference type="KEGG" id="xtr:407904"/>
<dbReference type="AGR" id="Xenbase:XB-GENE-941877"/>
<dbReference type="CTD" id="51614"/>
<dbReference type="Xenbase" id="XB-GENE-941877">
    <property type="gene designation" value="ergic3"/>
</dbReference>
<dbReference type="eggNOG" id="KOG2667">
    <property type="taxonomic scope" value="Eukaryota"/>
</dbReference>
<dbReference type="InParanoid" id="Q6NVS2"/>
<dbReference type="OrthoDB" id="270930at2759"/>
<dbReference type="Proteomes" id="UP000008143">
    <property type="component" value="Chromosome 10"/>
</dbReference>
<dbReference type="GO" id="GO:0005789">
    <property type="term" value="C:endoplasmic reticulum membrane"/>
    <property type="evidence" value="ECO:0007669"/>
    <property type="project" value="UniProtKB-SubCell"/>
</dbReference>
<dbReference type="GO" id="GO:0033116">
    <property type="term" value="C:endoplasmic reticulum-Golgi intermediate compartment membrane"/>
    <property type="evidence" value="ECO:0007669"/>
    <property type="project" value="UniProtKB-SubCell"/>
</dbReference>
<dbReference type="GO" id="GO:0005794">
    <property type="term" value="C:Golgi apparatus"/>
    <property type="evidence" value="ECO:0007669"/>
    <property type="project" value="UniProtKB-SubCell"/>
</dbReference>
<dbReference type="GO" id="GO:0046907">
    <property type="term" value="P:intracellular transport"/>
    <property type="evidence" value="ECO:0007669"/>
    <property type="project" value="UniProtKB-ARBA"/>
</dbReference>
<dbReference type="GO" id="GO:0016192">
    <property type="term" value="P:vesicle-mediated transport"/>
    <property type="evidence" value="ECO:0007669"/>
    <property type="project" value="UniProtKB-KW"/>
</dbReference>
<dbReference type="InterPro" id="IPR045888">
    <property type="entry name" value="Erv"/>
</dbReference>
<dbReference type="InterPro" id="IPR012936">
    <property type="entry name" value="Erv_C"/>
</dbReference>
<dbReference type="InterPro" id="IPR039542">
    <property type="entry name" value="Erv_N"/>
</dbReference>
<dbReference type="PANTHER" id="PTHR10984">
    <property type="entry name" value="ENDOPLASMIC RETICULUM-GOLGI INTERMEDIATE COMPARTMENT PROTEIN"/>
    <property type="match status" value="1"/>
</dbReference>
<dbReference type="PANTHER" id="PTHR10984:SF25">
    <property type="entry name" value="ENDOPLASMIC RETICULUM-GOLGI INTERMEDIATE COMPARTMENT PROTEIN 3"/>
    <property type="match status" value="1"/>
</dbReference>
<dbReference type="Pfam" id="PF07970">
    <property type="entry name" value="COPIIcoated_ERV"/>
    <property type="match status" value="1"/>
</dbReference>
<dbReference type="Pfam" id="PF13850">
    <property type="entry name" value="ERGIC_N"/>
    <property type="match status" value="1"/>
</dbReference>
<organism>
    <name type="scientific">Xenopus tropicalis</name>
    <name type="common">Western clawed frog</name>
    <name type="synonym">Silurana tropicalis</name>
    <dbReference type="NCBI Taxonomy" id="8364"/>
    <lineage>
        <taxon>Eukaryota</taxon>
        <taxon>Metazoa</taxon>
        <taxon>Chordata</taxon>
        <taxon>Craniata</taxon>
        <taxon>Vertebrata</taxon>
        <taxon>Euteleostomi</taxon>
        <taxon>Amphibia</taxon>
        <taxon>Batrachia</taxon>
        <taxon>Anura</taxon>
        <taxon>Pipoidea</taxon>
        <taxon>Pipidae</taxon>
        <taxon>Xenopodinae</taxon>
        <taxon>Xenopus</taxon>
        <taxon>Silurana</taxon>
    </lineage>
</organism>
<comment type="function">
    <text evidence="1">Possible role in transport between endoplasmic reticulum and Golgi.</text>
</comment>
<comment type="subcellular location">
    <subcellularLocation>
        <location>Endoplasmic reticulum-Golgi intermediate compartment membrane</location>
        <topology>Multi-pass membrane protein</topology>
    </subcellularLocation>
    <subcellularLocation>
        <location evidence="1">Golgi apparatus</location>
        <location evidence="1">cis-Golgi network membrane</location>
        <topology evidence="1">Multi-pass membrane protein</topology>
    </subcellularLocation>
    <subcellularLocation>
        <location evidence="1">Endoplasmic reticulum membrane</location>
        <topology evidence="1">Multi-pass membrane protein</topology>
    </subcellularLocation>
</comment>
<comment type="similarity">
    <text evidence="3">Belongs to the ERGIC family.</text>
</comment>
<sequence length="384" mass="43621">MESLHRLRQFDAYPKTLEDFRVKTCGGALVTVISGLIMLILFFSELQYYLTKEIYPELFVDKSRGDKLKINIDVIFPHMPCAYLSIDAMDVAGEQQLDVEHNLFKQRLDKDKKPVTSEADRHELGKSEEHVVFDPKSLDPNRCESCYGAETDDFSCCNTCDDVREAYRRRGWAFKTPDSIEQCKREGFSQKMQEQKNEGCQVYGFLEVNKVAGNFHFAPGKSFQQSHVHVHDLQSFGLDNINMTHEIRHLSFGRDYPGLVNPLDGSSVAAMQSSMMFQYFVKIVPTVYVKVDGEVLRTNQFSVTRHEKMTNGLIGDQGLPGVFVLYELSPMMVKLTEKHRSFTHFLTGVCAIIGGVFTVAGLIDSLVYYSTRAIQKKIELGKAT</sequence>